<sequence>MQCLTITAVQRERDTQSLSVITAELEPVRAPSLIAFFHGHSACMCPFRWRYSRFSLKQQRILAHDPVNTFGIDRRHTIKFCLSAKQRPYPTITIRWQLSDNMVYTEKHIRIISVTTAAAIHPVIGSSENDVQLRTRHPETTAD</sequence>
<organism>
    <name type="scientific">Escherichia coli</name>
    <dbReference type="NCBI Taxonomy" id="562"/>
    <lineage>
        <taxon>Bacteria</taxon>
        <taxon>Pseudomonadati</taxon>
        <taxon>Pseudomonadota</taxon>
        <taxon>Gammaproteobacteria</taxon>
        <taxon>Enterobacterales</taxon>
        <taxon>Enterobacteriaceae</taxon>
        <taxon>Escherichia</taxon>
    </lineage>
</organism>
<accession>P19779</accession>
<accession>P76917</accession>
<dbReference type="EMBL" id="V00279">
    <property type="protein sequence ID" value="CAA23539.1"/>
    <property type="molecule type" value="Genomic_DNA"/>
</dbReference>
<dbReference type="PIR" id="JQ0042">
    <property type="entry name" value="JQ0042"/>
</dbReference>
<reference key="1">
    <citation type="journal article" date="1987" name="Gene">
        <title>Genetic organization of insertion element IS2 based on a revised nucleotide sequence.</title>
        <authorList>
            <person name="Ronecker H.J."/>
            <person name="Rak B."/>
        </authorList>
    </citation>
    <scope>NUCLEOTIDE SEQUENCE [GENOMIC DNA]</scope>
    <source>
        <strain>ATCC 33694 / HB101</strain>
    </source>
</reference>
<feature type="chain" id="PRO_0000075494" description="Insertion element IS2 uncharacterized 16.4 kDa protein">
    <location>
        <begin position="1"/>
        <end position="143"/>
    </location>
</feature>
<proteinExistence type="predicted"/>
<protein>
    <recommendedName>
        <fullName>Insertion element IS2 uncharacterized 16.4 kDa protein</fullName>
    </recommendedName>
    <alternativeName>
        <fullName>ORF4</fullName>
    </alternativeName>
</protein>
<name>YI24_ECOLX</name>
<keyword id="KW-0814">Transposable element</keyword>